<proteinExistence type="inferred from homology"/>
<feature type="chain" id="PRO_1000195271" description="Crossover junction endodeoxyribonuclease RuvC">
    <location>
        <begin position="1"/>
        <end position="173"/>
    </location>
</feature>
<feature type="active site" evidence="1">
    <location>
        <position position="8"/>
    </location>
</feature>
<feature type="active site" evidence="1">
    <location>
        <position position="67"/>
    </location>
</feature>
<feature type="active site" evidence="1">
    <location>
        <position position="139"/>
    </location>
</feature>
<feature type="binding site" evidence="1">
    <location>
        <position position="8"/>
    </location>
    <ligand>
        <name>Mg(2+)</name>
        <dbReference type="ChEBI" id="CHEBI:18420"/>
        <label>1</label>
    </ligand>
</feature>
<feature type="binding site" evidence="1">
    <location>
        <position position="67"/>
    </location>
    <ligand>
        <name>Mg(2+)</name>
        <dbReference type="ChEBI" id="CHEBI:18420"/>
        <label>2</label>
    </ligand>
</feature>
<feature type="binding site" evidence="1">
    <location>
        <position position="139"/>
    </location>
    <ligand>
        <name>Mg(2+)</name>
        <dbReference type="ChEBI" id="CHEBI:18420"/>
        <label>1</label>
    </ligand>
</feature>
<comment type="function">
    <text evidence="1">The RuvA-RuvB-RuvC complex processes Holliday junction (HJ) DNA during genetic recombination and DNA repair. Endonuclease that resolves HJ intermediates. Cleaves cruciform DNA by making single-stranded nicks across the HJ at symmetrical positions within the homologous arms, yielding a 5'-phosphate and a 3'-hydroxyl group; requires a central core of homology in the junction. The consensus cleavage sequence is 5'-(A/T)TT(C/G)-3'. Cleavage occurs on the 3'-side of the TT dinucleotide at the point of strand exchange. HJ branch migration catalyzed by RuvA-RuvB allows RuvC to scan DNA until it finds its consensus sequence, where it cleaves and resolves the cruciform DNA.</text>
</comment>
<comment type="catalytic activity">
    <reaction evidence="1">
        <text>Endonucleolytic cleavage at a junction such as a reciprocal single-stranded crossover between two homologous DNA duplexes (Holliday junction).</text>
        <dbReference type="EC" id="3.1.21.10"/>
    </reaction>
</comment>
<comment type="cofactor">
    <cofactor evidence="1">
        <name>Mg(2+)</name>
        <dbReference type="ChEBI" id="CHEBI:18420"/>
    </cofactor>
    <text evidence="1">Binds 2 Mg(2+) ion per subunit.</text>
</comment>
<comment type="subunit">
    <text evidence="1">Homodimer which binds Holliday junction (HJ) DNA. The HJ becomes 2-fold symmetrical on binding to RuvC with unstacked arms; it has a different conformation from HJ DNA in complex with RuvA. In the full resolvosome a probable DNA-RuvA(4)-RuvB(12)-RuvC(2) complex forms which resolves the HJ.</text>
</comment>
<comment type="subcellular location">
    <subcellularLocation>
        <location evidence="1">Cytoplasm</location>
    </subcellularLocation>
</comment>
<comment type="similarity">
    <text evidence="1">Belongs to the RuvC family.</text>
</comment>
<name>RUVC_SALPC</name>
<reference key="1">
    <citation type="journal article" date="2009" name="PLoS ONE">
        <title>Salmonella paratyphi C: genetic divergence from Salmonella choleraesuis and pathogenic convergence with Salmonella typhi.</title>
        <authorList>
            <person name="Liu W.-Q."/>
            <person name="Feng Y."/>
            <person name="Wang Y."/>
            <person name="Zou Q.-H."/>
            <person name="Chen F."/>
            <person name="Guo J.-T."/>
            <person name="Peng Y.-H."/>
            <person name="Jin Y."/>
            <person name="Li Y.-G."/>
            <person name="Hu S.-N."/>
            <person name="Johnston R.N."/>
            <person name="Liu G.-R."/>
            <person name="Liu S.-L."/>
        </authorList>
    </citation>
    <scope>NUCLEOTIDE SEQUENCE [LARGE SCALE GENOMIC DNA]</scope>
    <source>
        <strain>RKS4594</strain>
    </source>
</reference>
<gene>
    <name evidence="1" type="primary">ruvC</name>
    <name type="ordered locus">SPC_1815</name>
</gene>
<protein>
    <recommendedName>
        <fullName evidence="1">Crossover junction endodeoxyribonuclease RuvC</fullName>
        <ecNumber evidence="1">3.1.21.10</ecNumber>
    </recommendedName>
    <alternativeName>
        <fullName evidence="1">Holliday junction nuclease RuvC</fullName>
    </alternativeName>
    <alternativeName>
        <fullName evidence="1">Holliday junction resolvase RuvC</fullName>
    </alternativeName>
</protein>
<sequence length="173" mass="18819">MSIILGIDPGSRITGYGVIRQVGRQLTYLGSGCIRTKVDDLPSRLKLIYAGVTEIITQFQPDYFAIEQVFMAKNADSALKLGQARGVAIVAAVNQELPVFEYAARQVKQTVVGIGSAEKSQVQHMVRTLLKLPANPQADAADALAIAITHCHVSQNVMQMSESRLNLARGRLR</sequence>
<evidence type="ECO:0000255" key="1">
    <source>
        <dbReference type="HAMAP-Rule" id="MF_00034"/>
    </source>
</evidence>
<organism>
    <name type="scientific">Salmonella paratyphi C (strain RKS4594)</name>
    <dbReference type="NCBI Taxonomy" id="476213"/>
    <lineage>
        <taxon>Bacteria</taxon>
        <taxon>Pseudomonadati</taxon>
        <taxon>Pseudomonadota</taxon>
        <taxon>Gammaproteobacteria</taxon>
        <taxon>Enterobacterales</taxon>
        <taxon>Enterobacteriaceae</taxon>
        <taxon>Salmonella</taxon>
    </lineage>
</organism>
<accession>C0Q2F1</accession>
<dbReference type="EC" id="3.1.21.10" evidence="1"/>
<dbReference type="EMBL" id="CP000857">
    <property type="protein sequence ID" value="ACN45954.1"/>
    <property type="molecule type" value="Genomic_DNA"/>
</dbReference>
<dbReference type="RefSeq" id="WP_000022511.1">
    <property type="nucleotide sequence ID" value="NC_012125.1"/>
</dbReference>
<dbReference type="SMR" id="C0Q2F1"/>
<dbReference type="KEGG" id="sei:SPC_1815"/>
<dbReference type="HOGENOM" id="CLU_091257_2_1_6"/>
<dbReference type="Proteomes" id="UP000001599">
    <property type="component" value="Chromosome"/>
</dbReference>
<dbReference type="GO" id="GO:0005737">
    <property type="term" value="C:cytoplasm"/>
    <property type="evidence" value="ECO:0007669"/>
    <property type="project" value="UniProtKB-SubCell"/>
</dbReference>
<dbReference type="GO" id="GO:0048476">
    <property type="term" value="C:Holliday junction resolvase complex"/>
    <property type="evidence" value="ECO:0007669"/>
    <property type="project" value="UniProtKB-UniRule"/>
</dbReference>
<dbReference type="GO" id="GO:0008821">
    <property type="term" value="F:crossover junction DNA endonuclease activity"/>
    <property type="evidence" value="ECO:0007669"/>
    <property type="project" value="UniProtKB-UniRule"/>
</dbReference>
<dbReference type="GO" id="GO:0003677">
    <property type="term" value="F:DNA binding"/>
    <property type="evidence" value="ECO:0007669"/>
    <property type="project" value="UniProtKB-KW"/>
</dbReference>
<dbReference type="GO" id="GO:0000287">
    <property type="term" value="F:magnesium ion binding"/>
    <property type="evidence" value="ECO:0007669"/>
    <property type="project" value="UniProtKB-UniRule"/>
</dbReference>
<dbReference type="GO" id="GO:0006310">
    <property type="term" value="P:DNA recombination"/>
    <property type="evidence" value="ECO:0007669"/>
    <property type="project" value="UniProtKB-UniRule"/>
</dbReference>
<dbReference type="GO" id="GO:0006281">
    <property type="term" value="P:DNA repair"/>
    <property type="evidence" value="ECO:0007669"/>
    <property type="project" value="UniProtKB-UniRule"/>
</dbReference>
<dbReference type="CDD" id="cd16962">
    <property type="entry name" value="RuvC"/>
    <property type="match status" value="1"/>
</dbReference>
<dbReference type="FunFam" id="3.30.420.10:FF:000002">
    <property type="entry name" value="Crossover junction endodeoxyribonuclease RuvC"/>
    <property type="match status" value="1"/>
</dbReference>
<dbReference type="Gene3D" id="3.30.420.10">
    <property type="entry name" value="Ribonuclease H-like superfamily/Ribonuclease H"/>
    <property type="match status" value="1"/>
</dbReference>
<dbReference type="HAMAP" id="MF_00034">
    <property type="entry name" value="RuvC"/>
    <property type="match status" value="1"/>
</dbReference>
<dbReference type="InterPro" id="IPR012337">
    <property type="entry name" value="RNaseH-like_sf"/>
</dbReference>
<dbReference type="InterPro" id="IPR036397">
    <property type="entry name" value="RNaseH_sf"/>
</dbReference>
<dbReference type="InterPro" id="IPR020563">
    <property type="entry name" value="X-over_junc_endoDNase_Mg_BS"/>
</dbReference>
<dbReference type="InterPro" id="IPR002176">
    <property type="entry name" value="X-over_junc_endoDNase_RuvC"/>
</dbReference>
<dbReference type="NCBIfam" id="NF000711">
    <property type="entry name" value="PRK00039.2-1"/>
    <property type="match status" value="1"/>
</dbReference>
<dbReference type="NCBIfam" id="TIGR00228">
    <property type="entry name" value="ruvC"/>
    <property type="match status" value="1"/>
</dbReference>
<dbReference type="PANTHER" id="PTHR30194">
    <property type="entry name" value="CROSSOVER JUNCTION ENDODEOXYRIBONUCLEASE RUVC"/>
    <property type="match status" value="1"/>
</dbReference>
<dbReference type="PANTHER" id="PTHR30194:SF3">
    <property type="entry name" value="CROSSOVER JUNCTION ENDODEOXYRIBONUCLEASE RUVC"/>
    <property type="match status" value="1"/>
</dbReference>
<dbReference type="Pfam" id="PF02075">
    <property type="entry name" value="RuvC"/>
    <property type="match status" value="1"/>
</dbReference>
<dbReference type="PRINTS" id="PR00696">
    <property type="entry name" value="RSOLVASERUVC"/>
</dbReference>
<dbReference type="SUPFAM" id="SSF53098">
    <property type="entry name" value="Ribonuclease H-like"/>
    <property type="match status" value="1"/>
</dbReference>
<dbReference type="PROSITE" id="PS01321">
    <property type="entry name" value="RUVC"/>
    <property type="match status" value="1"/>
</dbReference>
<keyword id="KW-0963">Cytoplasm</keyword>
<keyword id="KW-0227">DNA damage</keyword>
<keyword id="KW-0233">DNA recombination</keyword>
<keyword id="KW-0234">DNA repair</keyword>
<keyword id="KW-0238">DNA-binding</keyword>
<keyword id="KW-0255">Endonuclease</keyword>
<keyword id="KW-0378">Hydrolase</keyword>
<keyword id="KW-0460">Magnesium</keyword>
<keyword id="KW-0479">Metal-binding</keyword>
<keyword id="KW-0540">Nuclease</keyword>